<name>PTMA_ENTFA</name>
<keyword id="KW-0963">Cytoplasm</keyword>
<keyword id="KW-0418">Kinase</keyword>
<keyword id="KW-0597">Phosphoprotein</keyword>
<keyword id="KW-0598">Phosphotransferase system</keyword>
<keyword id="KW-1185">Reference proteome</keyword>
<keyword id="KW-0762">Sugar transport</keyword>
<keyword id="KW-0808">Transferase</keyword>
<keyword id="KW-0813">Transport</keyword>
<accession>P27547</accession>
<proteinExistence type="inferred from homology"/>
<evidence type="ECO:0000250" key="1">
    <source>
        <dbReference type="UniProtKB" id="P00550"/>
    </source>
</evidence>
<evidence type="ECO:0000250" key="2">
    <source>
        <dbReference type="UniProtKB" id="P0A0E0"/>
    </source>
</evidence>
<evidence type="ECO:0000255" key="3">
    <source>
        <dbReference type="PROSITE-ProRule" id="PRU00417"/>
    </source>
</evidence>
<evidence type="ECO:0000303" key="4">
    <source>
    </source>
</evidence>
<evidence type="ECO:0000305" key="5"/>
<organism>
    <name type="scientific">Enterococcus faecalis (strain ATCC 700802 / V583)</name>
    <dbReference type="NCBI Taxonomy" id="226185"/>
    <lineage>
        <taxon>Bacteria</taxon>
        <taxon>Bacillati</taxon>
        <taxon>Bacillota</taxon>
        <taxon>Bacilli</taxon>
        <taxon>Lactobacillales</taxon>
        <taxon>Enterococcaceae</taxon>
        <taxon>Enterococcus</taxon>
    </lineage>
</organism>
<dbReference type="EMBL" id="M38386">
    <property type="protein sequence ID" value="AAA24779.1"/>
    <property type="molecule type" value="Genomic_DNA"/>
</dbReference>
<dbReference type="EMBL" id="AE016830">
    <property type="protein sequence ID" value="AAO80271.1"/>
    <property type="molecule type" value="Genomic_DNA"/>
</dbReference>
<dbReference type="PIR" id="A39435">
    <property type="entry name" value="WQSO3M"/>
</dbReference>
<dbReference type="RefSeq" id="NP_814200.1">
    <property type="nucleotide sequence ID" value="NC_004668.1"/>
</dbReference>
<dbReference type="RefSeq" id="WP_002355279.1">
    <property type="nucleotide sequence ID" value="NZ_KE136524.1"/>
</dbReference>
<dbReference type="SMR" id="P27547"/>
<dbReference type="STRING" id="226185.EF_0412"/>
<dbReference type="EnsemblBacteria" id="AAO80271">
    <property type="protein sequence ID" value="AAO80271"/>
    <property type="gene ID" value="EF_0412"/>
</dbReference>
<dbReference type="KEGG" id="efa:EF0412"/>
<dbReference type="PATRIC" id="fig|226185.45.peg.2920"/>
<dbReference type="eggNOG" id="COG4668">
    <property type="taxonomic scope" value="Bacteria"/>
</dbReference>
<dbReference type="HOGENOM" id="CLU_072531_3_0_9"/>
<dbReference type="Proteomes" id="UP000001415">
    <property type="component" value="Chromosome"/>
</dbReference>
<dbReference type="GO" id="GO:0005737">
    <property type="term" value="C:cytoplasm"/>
    <property type="evidence" value="ECO:0007669"/>
    <property type="project" value="UniProtKB-SubCell"/>
</dbReference>
<dbReference type="GO" id="GO:0005886">
    <property type="term" value="C:plasma membrane"/>
    <property type="evidence" value="ECO:0007669"/>
    <property type="project" value="TreeGrafter"/>
</dbReference>
<dbReference type="GO" id="GO:0016301">
    <property type="term" value="F:kinase activity"/>
    <property type="evidence" value="ECO:0007669"/>
    <property type="project" value="UniProtKB-KW"/>
</dbReference>
<dbReference type="GO" id="GO:0090563">
    <property type="term" value="F:protein-phosphocysteine-sugar phosphotransferase activity"/>
    <property type="evidence" value="ECO:0007669"/>
    <property type="project" value="TreeGrafter"/>
</dbReference>
<dbReference type="GO" id="GO:0009401">
    <property type="term" value="P:phosphoenolpyruvate-dependent sugar phosphotransferase system"/>
    <property type="evidence" value="ECO:0007669"/>
    <property type="project" value="UniProtKB-KW"/>
</dbReference>
<dbReference type="CDD" id="cd00211">
    <property type="entry name" value="PTS_IIA_fru"/>
    <property type="match status" value="1"/>
</dbReference>
<dbReference type="Gene3D" id="3.40.930.10">
    <property type="entry name" value="Mannitol-specific EII, Chain A"/>
    <property type="match status" value="1"/>
</dbReference>
<dbReference type="InterPro" id="IPR016152">
    <property type="entry name" value="PTrfase/Anion_transptr"/>
</dbReference>
<dbReference type="InterPro" id="IPR002178">
    <property type="entry name" value="PTS_EIIA_type-2_dom"/>
</dbReference>
<dbReference type="InterPro" id="IPR050893">
    <property type="entry name" value="Sugar_PTS"/>
</dbReference>
<dbReference type="PANTHER" id="PTHR30181">
    <property type="entry name" value="MANNITOL PERMEASE IIC COMPONENT"/>
    <property type="match status" value="1"/>
</dbReference>
<dbReference type="PANTHER" id="PTHR30181:SF2">
    <property type="entry name" value="PTS SYSTEM MANNITOL-SPECIFIC EIICBA COMPONENT"/>
    <property type="match status" value="1"/>
</dbReference>
<dbReference type="Pfam" id="PF00359">
    <property type="entry name" value="PTS_EIIA_2"/>
    <property type="match status" value="1"/>
</dbReference>
<dbReference type="SUPFAM" id="SSF55804">
    <property type="entry name" value="Phoshotransferase/anion transport protein"/>
    <property type="match status" value="1"/>
</dbReference>
<dbReference type="PROSITE" id="PS51094">
    <property type="entry name" value="PTS_EIIA_TYPE_2"/>
    <property type="match status" value="1"/>
</dbReference>
<dbReference type="PROSITE" id="PS00372">
    <property type="entry name" value="PTS_EIIA_TYPE_2_HIS"/>
    <property type="match status" value="1"/>
</dbReference>
<gene>
    <name evidence="4" type="primary">mtlF</name>
    <name type="ordered locus">EF_0412</name>
</gene>
<feature type="chain" id="PRO_0000186634" description="Mannitol-specific phosphotransferase enzyme IIA component">
    <location>
        <begin position="1"/>
        <end position="145"/>
    </location>
</feature>
<feature type="domain" description="PTS EIIA type-2" evidence="3">
    <location>
        <begin position="2"/>
        <end position="145"/>
    </location>
</feature>
<feature type="active site" description="Tele-phosphohistidine intermediate" evidence="2 3">
    <location>
        <position position="62"/>
    </location>
</feature>
<feature type="modified residue" description="Phosphohistidine; by HPr" evidence="1 2">
    <location>
        <position position="62"/>
    </location>
</feature>
<feature type="sequence conflict" description="In Ref. 1; AAA24779." evidence="5" ref="1">
    <original>CGE</original>
    <variation>SGQ</variation>
    <location>
        <begin position="25"/>
        <end position="27"/>
    </location>
</feature>
<feature type="sequence conflict" description="In Ref. 1; AAA24779." evidence="5" ref="1">
    <original>VY</original>
    <variation>AH</variation>
    <location>
        <begin position="52"/>
        <end position="53"/>
    </location>
</feature>
<comment type="function">
    <text evidence="2">The phosphoenolpyruvate-dependent sugar phosphotransferase system (sugar PTS), a major carbohydrate active transport system, catalyzes the phosphorylation of incoming sugar substrates concomitantly with their translocation across the cell membrane. The enzyme II CmtAB PTS system is involved in D-mannitol transport.</text>
</comment>
<comment type="subcellular location">
    <subcellularLocation>
        <location evidence="5">Cytoplasm</location>
    </subcellularLocation>
</comment>
<comment type="domain">
    <text evidence="3">The PTS EIIA type-2 domain is phosphorylated by phospho-HPr on a histidyl residue. Then, it transfers the phosphoryl group to the PTS EIIB type-2 domain.</text>
</comment>
<sequence length="145" mass="15947">MENLTNISIELNQQFNTKEEAIRFCGEKLVEAGCVEPAYIEAMIERDQLLSVYMGNFIAIPHGTEEAKKLVKKSGICVVQVPEGVNFGTEEDEKIATVLFGIAGVGEEHLQLVQQIALYCSDMDNVVQLADALSKEEITENLAIA</sequence>
<reference key="1">
    <citation type="journal article" date="1991" name="J. Bacteriol.">
        <title>Mannitol-specific phosphoenolpyruvate-dependent phosphotransferase system of Enterococcus faecalis: molecular cloning and nucleotide sequences of the enzyme IIIMtl gene and the mannitol-1-phosphate dehydrogenase gene, expression in Escherichia coli, and comparison of the gene products with similar enzymes.</title>
        <authorList>
            <person name="Fischer R."/>
            <person name="von Strandmann R.P."/>
            <person name="Hengstenberg W."/>
        </authorList>
    </citation>
    <scope>NUCLEOTIDE SEQUENCE [GENOMIC DNA]</scope>
</reference>
<reference key="2">
    <citation type="journal article" date="2003" name="Science">
        <title>Role of mobile DNA in the evolution of vancomycin-resistant Enterococcus faecalis.</title>
        <authorList>
            <person name="Paulsen I.T."/>
            <person name="Banerjei L."/>
            <person name="Myers G.S.A."/>
            <person name="Nelson K.E."/>
            <person name="Seshadri R."/>
            <person name="Read T.D."/>
            <person name="Fouts D.E."/>
            <person name="Eisen J.A."/>
            <person name="Gill S.R."/>
            <person name="Heidelberg J.F."/>
            <person name="Tettelin H."/>
            <person name="Dodson R.J."/>
            <person name="Umayam L.A."/>
            <person name="Brinkac L.M."/>
            <person name="Beanan M.J."/>
            <person name="Daugherty S.C."/>
            <person name="DeBoy R.T."/>
            <person name="Durkin S.A."/>
            <person name="Kolonay J.F."/>
            <person name="Madupu R."/>
            <person name="Nelson W.C."/>
            <person name="Vamathevan J.J."/>
            <person name="Tran B."/>
            <person name="Upton J."/>
            <person name="Hansen T."/>
            <person name="Shetty J."/>
            <person name="Khouri H.M."/>
            <person name="Utterback T.R."/>
            <person name="Radune D."/>
            <person name="Ketchum K.A."/>
            <person name="Dougherty B.A."/>
            <person name="Fraser C.M."/>
        </authorList>
    </citation>
    <scope>NUCLEOTIDE SEQUENCE [LARGE SCALE GENOMIC DNA]</scope>
    <source>
        <strain>ATCC 700802 / V583</strain>
    </source>
</reference>
<protein>
    <recommendedName>
        <fullName evidence="2">Mannitol-specific phosphotransferase enzyme IIA component</fullName>
    </recommendedName>
    <alternativeName>
        <fullName evidence="2">EIIA</fullName>
    </alternativeName>
    <alternativeName>
        <fullName evidence="4">EIII</fullName>
    </alternativeName>
    <alternativeName>
        <fullName evidence="2">PTS system mannitol-specific EIIA component</fullName>
    </alternativeName>
</protein>